<name>AAC3_DICDI</name>
<proteinExistence type="evidence at transcript level"/>
<evidence type="ECO:0000256" key="1">
    <source>
        <dbReference type="SAM" id="MobiDB-lite"/>
    </source>
</evidence>
<evidence type="ECO:0000269" key="2">
    <source>
    </source>
</evidence>
<evidence type="ECO:0000305" key="3"/>
<dbReference type="EMBL" id="AAFI02000014">
    <property type="protein sequence ID" value="EAL69315.1"/>
    <property type="molecule type" value="Genomic_DNA"/>
</dbReference>
<dbReference type="EMBL" id="X16524">
    <property type="protein sequence ID" value="CAA34531.1"/>
    <property type="molecule type" value="mRNA"/>
</dbReference>
<dbReference type="PIR" id="S05357">
    <property type="entry name" value="S05357"/>
</dbReference>
<dbReference type="RefSeq" id="XP_643326.1">
    <property type="nucleotide sequence ID" value="XM_638234.1"/>
</dbReference>
<dbReference type="SMR" id="P14197"/>
<dbReference type="FunCoup" id="P14197">
    <property type="interactions" value="750"/>
</dbReference>
<dbReference type="STRING" id="44689.P14197"/>
<dbReference type="PaxDb" id="44689-DDB0185151"/>
<dbReference type="EnsemblProtists" id="EAL69315">
    <property type="protein sequence ID" value="EAL69315"/>
    <property type="gene ID" value="DDB_G0276031"/>
</dbReference>
<dbReference type="GeneID" id="8620373"/>
<dbReference type="KEGG" id="ddi:DDB_G0276031"/>
<dbReference type="dictyBase" id="DDB_G0276031"/>
<dbReference type="VEuPathDB" id="AmoebaDB:DDB_G0276031"/>
<dbReference type="eggNOG" id="KOG1407">
    <property type="taxonomic scope" value="Eukaryota"/>
</dbReference>
<dbReference type="HOGENOM" id="CLU_045202_0_0_1"/>
<dbReference type="InParanoid" id="P14197"/>
<dbReference type="OMA" id="WDIEDMM"/>
<dbReference type="PhylomeDB" id="P14197"/>
<dbReference type="PRO" id="PR:P14197"/>
<dbReference type="Proteomes" id="UP000002195">
    <property type="component" value="Chromosome 2"/>
</dbReference>
<dbReference type="GO" id="GO:0000445">
    <property type="term" value="C:THO complex part of transcription export complex"/>
    <property type="evidence" value="ECO:0000318"/>
    <property type="project" value="GO_Central"/>
</dbReference>
<dbReference type="GO" id="GO:0006406">
    <property type="term" value="P:mRNA export from nucleus"/>
    <property type="evidence" value="ECO:0000318"/>
    <property type="project" value="GO_Central"/>
</dbReference>
<dbReference type="CDD" id="cd00200">
    <property type="entry name" value="WD40"/>
    <property type="match status" value="1"/>
</dbReference>
<dbReference type="FunFam" id="2.130.10.10:FF:002892">
    <property type="entry name" value="WD repeat-containing protein AAC3"/>
    <property type="match status" value="1"/>
</dbReference>
<dbReference type="Gene3D" id="2.130.10.10">
    <property type="entry name" value="YVTN repeat-like/Quinoprotein amine dehydrogenase"/>
    <property type="match status" value="2"/>
</dbReference>
<dbReference type="InterPro" id="IPR020472">
    <property type="entry name" value="G-protein_beta_WD-40_rep"/>
</dbReference>
<dbReference type="InterPro" id="IPR040132">
    <property type="entry name" value="Tex1/THOC3"/>
</dbReference>
<dbReference type="InterPro" id="IPR015943">
    <property type="entry name" value="WD40/YVTN_repeat-like_dom_sf"/>
</dbReference>
<dbReference type="InterPro" id="IPR019775">
    <property type="entry name" value="WD40_repeat_CS"/>
</dbReference>
<dbReference type="InterPro" id="IPR036322">
    <property type="entry name" value="WD40_repeat_dom_sf"/>
</dbReference>
<dbReference type="InterPro" id="IPR001680">
    <property type="entry name" value="WD40_rpt"/>
</dbReference>
<dbReference type="PANTHER" id="PTHR22839:SF0">
    <property type="entry name" value="THO COMPLEX SUBUNIT 3"/>
    <property type="match status" value="1"/>
</dbReference>
<dbReference type="PANTHER" id="PTHR22839">
    <property type="entry name" value="THO COMPLEX SUBUNIT 3 THO3"/>
    <property type="match status" value="1"/>
</dbReference>
<dbReference type="Pfam" id="PF25174">
    <property type="entry name" value="Beta-prop_THOC3"/>
    <property type="match status" value="1"/>
</dbReference>
<dbReference type="PRINTS" id="PR00320">
    <property type="entry name" value="GPROTEINBRPT"/>
</dbReference>
<dbReference type="SMART" id="SM00320">
    <property type="entry name" value="WD40"/>
    <property type="match status" value="5"/>
</dbReference>
<dbReference type="SUPFAM" id="SSF50978">
    <property type="entry name" value="WD40 repeat-like"/>
    <property type="match status" value="1"/>
</dbReference>
<dbReference type="PROSITE" id="PS00678">
    <property type="entry name" value="WD_REPEATS_1"/>
    <property type="match status" value="3"/>
</dbReference>
<dbReference type="PROSITE" id="PS50082">
    <property type="entry name" value="WD_REPEATS_2"/>
    <property type="match status" value="3"/>
</dbReference>
<dbReference type="PROSITE" id="PS50294">
    <property type="entry name" value="WD_REPEATS_REGION"/>
    <property type="match status" value="1"/>
</dbReference>
<reference key="1">
    <citation type="journal article" date="2002" name="Nature">
        <title>Sequence and analysis of chromosome 2 of Dictyostelium discoideum.</title>
        <authorList>
            <person name="Gloeckner G."/>
            <person name="Eichinger L."/>
            <person name="Szafranski K."/>
            <person name="Pachebat J.A."/>
            <person name="Bankier A.T."/>
            <person name="Dear P.H."/>
            <person name="Lehmann R."/>
            <person name="Baumgart C."/>
            <person name="Parra G."/>
            <person name="Abril J.F."/>
            <person name="Guigo R."/>
            <person name="Kumpf K."/>
            <person name="Tunggal B."/>
            <person name="Cox E.C."/>
            <person name="Quail M.A."/>
            <person name="Platzer M."/>
            <person name="Rosenthal A."/>
            <person name="Noegel A.A."/>
        </authorList>
    </citation>
    <scope>NUCLEOTIDE SEQUENCE [LARGE SCALE GENOMIC DNA]</scope>
    <source>
        <strain>AX4</strain>
    </source>
</reference>
<reference key="2">
    <citation type="journal article" date="2005" name="Nature">
        <title>The genome of the social amoeba Dictyostelium discoideum.</title>
        <authorList>
            <person name="Eichinger L."/>
            <person name="Pachebat J.A."/>
            <person name="Gloeckner G."/>
            <person name="Rajandream M.A."/>
            <person name="Sucgang R."/>
            <person name="Berriman M."/>
            <person name="Song J."/>
            <person name="Olsen R."/>
            <person name="Szafranski K."/>
            <person name="Xu Q."/>
            <person name="Tunggal B."/>
            <person name="Kummerfeld S."/>
            <person name="Madera M."/>
            <person name="Konfortov B.A."/>
            <person name="Rivero F."/>
            <person name="Bankier A.T."/>
            <person name="Lehmann R."/>
            <person name="Hamlin N."/>
            <person name="Davies R."/>
            <person name="Gaudet P."/>
            <person name="Fey P."/>
            <person name="Pilcher K."/>
            <person name="Chen G."/>
            <person name="Saunders D."/>
            <person name="Sodergren E.J."/>
            <person name="Davis P."/>
            <person name="Kerhornou A."/>
            <person name="Nie X."/>
            <person name="Hall N."/>
            <person name="Anjard C."/>
            <person name="Hemphill L."/>
            <person name="Bason N."/>
            <person name="Farbrother P."/>
            <person name="Desany B."/>
            <person name="Just E."/>
            <person name="Morio T."/>
            <person name="Rost R."/>
            <person name="Churcher C.M."/>
            <person name="Cooper J."/>
            <person name="Haydock S."/>
            <person name="van Driessche N."/>
            <person name="Cronin A."/>
            <person name="Goodhead I."/>
            <person name="Muzny D.M."/>
            <person name="Mourier T."/>
            <person name="Pain A."/>
            <person name="Lu M."/>
            <person name="Harper D."/>
            <person name="Lindsay R."/>
            <person name="Hauser H."/>
            <person name="James K.D."/>
            <person name="Quiles M."/>
            <person name="Madan Babu M."/>
            <person name="Saito T."/>
            <person name="Buchrieser C."/>
            <person name="Wardroper A."/>
            <person name="Felder M."/>
            <person name="Thangavelu M."/>
            <person name="Johnson D."/>
            <person name="Knights A."/>
            <person name="Loulseged H."/>
            <person name="Mungall K.L."/>
            <person name="Oliver K."/>
            <person name="Price C."/>
            <person name="Quail M.A."/>
            <person name="Urushihara H."/>
            <person name="Hernandez J."/>
            <person name="Rabbinowitsch E."/>
            <person name="Steffen D."/>
            <person name="Sanders M."/>
            <person name="Ma J."/>
            <person name="Kohara Y."/>
            <person name="Sharp S."/>
            <person name="Simmonds M.N."/>
            <person name="Spiegler S."/>
            <person name="Tivey A."/>
            <person name="Sugano S."/>
            <person name="White B."/>
            <person name="Walker D."/>
            <person name="Woodward J.R."/>
            <person name="Winckler T."/>
            <person name="Tanaka Y."/>
            <person name="Shaulsky G."/>
            <person name="Schleicher M."/>
            <person name="Weinstock G.M."/>
            <person name="Rosenthal A."/>
            <person name="Cox E.C."/>
            <person name="Chisholm R.L."/>
            <person name="Gibbs R.A."/>
            <person name="Loomis W.F."/>
            <person name="Platzer M."/>
            <person name="Kay R.R."/>
            <person name="Williams J.G."/>
            <person name="Dear P.H."/>
            <person name="Noegel A.A."/>
            <person name="Barrell B.G."/>
            <person name="Kuspa A."/>
        </authorList>
    </citation>
    <scope>NUCLEOTIDE SEQUENCE [LARGE SCALE GENOMIC DNA]</scope>
    <source>
        <strain>AX4</strain>
    </source>
</reference>
<reference key="3">
    <citation type="journal article" date="1989" name="Mol. Gen. Genet.">
        <title>Nucleotide sequences of Dictyostelium discoideum developmentally regulated cDNAs rich in (AAC) imply proteins that contain clusters of asparagine, glutamine, or threonine.</title>
        <authorList>
            <person name="Shaw D.R."/>
            <person name="Richter H."/>
            <person name="Giorda R."/>
            <person name="Ohmachi T."/>
            <person name="Ennis H.L."/>
        </authorList>
    </citation>
    <scope>NUCLEOTIDE SEQUENCE [MRNA] OF 42-478</scope>
    <scope>DEVELOPMENTAL STAGE</scope>
</reference>
<protein>
    <recommendedName>
        <fullName>WD repeat-containing protein AAC3</fullName>
    </recommendedName>
    <alternativeName>
        <fullName>AAC-rich mRNA clone AAC3 protein</fullName>
    </alternativeName>
</protein>
<sequence>MGSRLNPSSNMYIPMNGPRGGYYGMPSMGQLQHPLFNYQFPPGGFQHLQQQQQQQQQQQQQQQQQQQQQTQVQQLHNQLHQQHNQQIQQQAQATQQHLQTQQYLQSQIHQQSQQSQLSNNLNSNSKESTNIPKTNTQYTNFDSKNLDLASRYFSECSTKDFIGNKKKSTSVAWNANGTKIASSGSDGIVRVWNFDPLGNSNNNNNSNNTSSNSKNNNIKETIELKGHDGSIEKISWSPKNNDLLASAGTDKVIKIWDVKIGKCIGTVSTNSENIDVRWSPDGQFIVACTRDDHLALIDLPTIKTLKIYKFNGEELNQVGWDNNGDLILMANSMGNIEAYKFLPKSTTHVKHLKTLYGHTASIYCMEFDPTGKYLAAGSADSIVSLWDIEDMMCVKTFIKSTFPCRSVSFSFDGQFIAASSFESTIEIFHIESSQPIHTIECSGVSSLMWHPTLPLLAYAPEINENNKDPSIRVFGYHS</sequence>
<keyword id="KW-1185">Reference proteome</keyword>
<keyword id="KW-0677">Repeat</keyword>
<keyword id="KW-0853">WD repeat</keyword>
<organism>
    <name type="scientific">Dictyostelium discoideum</name>
    <name type="common">Social amoeba</name>
    <dbReference type="NCBI Taxonomy" id="44689"/>
    <lineage>
        <taxon>Eukaryota</taxon>
        <taxon>Amoebozoa</taxon>
        <taxon>Evosea</taxon>
        <taxon>Eumycetozoa</taxon>
        <taxon>Dictyostelia</taxon>
        <taxon>Dictyosteliales</taxon>
        <taxon>Dictyosteliaceae</taxon>
        <taxon>Dictyostelium</taxon>
    </lineage>
</organism>
<accession>P14197</accession>
<accession>Q552A2</accession>
<accession>Q75JM2</accession>
<gene>
    <name type="primary">AAC3</name>
    <name type="ORF">DDB_G0276031</name>
</gene>
<feature type="chain" id="PRO_0000050830" description="WD repeat-containing protein AAC3">
    <location>
        <begin position="1"/>
        <end position="478"/>
    </location>
</feature>
<feature type="repeat" description="WD 1">
    <location>
        <begin position="163"/>
        <end position="202"/>
    </location>
</feature>
<feature type="repeat" description="WD 2">
    <location>
        <begin position="226"/>
        <end position="268"/>
    </location>
</feature>
<feature type="repeat" description="WD 3">
    <location>
        <begin position="270"/>
        <end position="307"/>
    </location>
</feature>
<feature type="repeat" description="WD 4">
    <location>
        <begin position="310"/>
        <end position="349"/>
    </location>
</feature>
<feature type="repeat" description="WD 5">
    <location>
        <begin position="357"/>
        <end position="396"/>
    </location>
</feature>
<feature type="repeat" description="WD 6">
    <location>
        <begin position="399"/>
        <end position="438"/>
    </location>
</feature>
<feature type="repeat" description="WD 7">
    <location>
        <begin position="440"/>
        <end position="478"/>
    </location>
</feature>
<feature type="region of interest" description="Disordered" evidence="1">
    <location>
        <begin position="33"/>
        <end position="53"/>
    </location>
</feature>
<feature type="region of interest" description="Disordered" evidence="1">
    <location>
        <begin position="106"/>
        <end position="140"/>
    </location>
</feature>
<feature type="compositionally biased region" description="Low complexity" evidence="1">
    <location>
        <begin position="106"/>
        <end position="125"/>
    </location>
</feature>
<feature type="compositionally biased region" description="Polar residues" evidence="1">
    <location>
        <begin position="126"/>
        <end position="140"/>
    </location>
</feature>
<comment type="developmental stage">
    <text evidence="2">The concentration of AAC-rich mRNAs is low in dormant spores and growing cells, but increases during spore-germination and multicellular development.</text>
</comment>
<comment type="miscellaneous">
    <text>Several proteins derive from AAC-rich mRNA, which, due to a frameshift also have ACA and CAA codons and thus are Asn-, Thr- or Gln-rich.</text>
</comment>
<comment type="similarity">
    <text evidence="3">Belongs to the THOC3 family.</text>
</comment>